<protein>
    <recommendedName>
        <fullName>Interleukin-1 alpha</fullName>
        <shortName>IL-1 alpha</shortName>
    </recommendedName>
</protein>
<proteinExistence type="evidence at transcript level"/>
<accession>P79161</accession>
<evidence type="ECO:0000250" key="1"/>
<evidence type="ECO:0000250" key="2">
    <source>
        <dbReference type="UniProtKB" id="P01582"/>
    </source>
</evidence>
<evidence type="ECO:0000250" key="3">
    <source>
        <dbReference type="UniProtKB" id="P01583"/>
    </source>
</evidence>
<evidence type="ECO:0000255" key="4"/>
<evidence type="ECO:0000305" key="5"/>
<organism>
    <name type="scientific">Capra hircus</name>
    <name type="common">Goat</name>
    <dbReference type="NCBI Taxonomy" id="9925"/>
    <lineage>
        <taxon>Eukaryota</taxon>
        <taxon>Metazoa</taxon>
        <taxon>Chordata</taxon>
        <taxon>Craniata</taxon>
        <taxon>Vertebrata</taxon>
        <taxon>Euteleostomi</taxon>
        <taxon>Mammalia</taxon>
        <taxon>Eutheria</taxon>
        <taxon>Laurasiatheria</taxon>
        <taxon>Artiodactyla</taxon>
        <taxon>Ruminantia</taxon>
        <taxon>Pecora</taxon>
        <taxon>Bovidae</taxon>
        <taxon>Caprinae</taxon>
        <taxon>Capra</taxon>
    </lineage>
</organism>
<gene>
    <name type="primary">IL1A</name>
</gene>
<keyword id="KW-0007">Acetylation</keyword>
<keyword id="KW-0202">Cytokine</keyword>
<keyword id="KW-0963">Cytoplasm</keyword>
<keyword id="KW-0325">Glycoprotein</keyword>
<keyword id="KW-0395">Inflammatory response</keyword>
<keyword id="KW-0497">Mitogen</keyword>
<keyword id="KW-0539">Nucleus</keyword>
<keyword id="KW-0597">Phosphoprotein</keyword>
<keyword id="KW-0666">Pyrogen</keyword>
<keyword id="KW-1185">Reference proteome</keyword>
<keyword id="KW-0964">Secreted</keyword>
<sequence>MAKVPDLFEDLKNCYSENEDYSSEIDHLSLNQKSFYDASYGPLREDHMNKFMSLDTSETSKTSRLSFKENVVMVTANGKILKKRRLSLNQFITDDDLEAIANDTEEEIIKPRSAHYSFQSNVKYNFMRVIHQECILNDALNQSIIRDMSGPYLMAATLNNLEEAVKFDMVAYVSEEDSQLPVTLRISKTQLFVSAQNEDEPVLLKEMPETPKIIKDETNLLFFWEKHGSMDYFKSVAHPKLFIATKQEKLVHMASGPPSITDFQILEK</sequence>
<feature type="propeptide" id="PRO_0000015255" evidence="1">
    <location>
        <begin position="1"/>
        <end position="112"/>
    </location>
</feature>
<feature type="chain" id="PRO_0000015256" description="Interleukin-1 alpha">
    <location>
        <begin position="113"/>
        <end position="268"/>
    </location>
</feature>
<feature type="region of interest" description="Nuclear localization signal (NLS)" evidence="3">
    <location>
        <begin position="82"/>
        <end position="86"/>
    </location>
</feature>
<feature type="modified residue" description="N6-acetyllysine" evidence="3">
    <location>
        <position position="82"/>
    </location>
</feature>
<feature type="modified residue" description="Phosphoserine" evidence="2">
    <location>
        <position position="87"/>
    </location>
</feature>
<feature type="glycosylation site" description="N-linked (GlcNAc...) asparagine" evidence="4">
    <location>
        <position position="102"/>
    </location>
</feature>
<feature type="glycosylation site" description="N-linked (GlcNAc...) asparagine" evidence="4">
    <location>
        <position position="141"/>
    </location>
</feature>
<reference key="1">
    <citation type="submission" date="1995-06" db="EMBL/GenBank/DDBJ databases">
        <title>Molecular cloning and expression of caprine IL-1alpha and IL-1beta.</title>
        <authorList>
            <person name="Takakura H."/>
            <person name="Hashimoto O."/>
            <person name="Mori Y."/>
            <person name="Tatsumi M."/>
        </authorList>
    </citation>
    <scope>NUCLEOTIDE SEQUENCE [MRNA]</scope>
</reference>
<dbReference type="EMBL" id="D63350">
    <property type="protein sequence ID" value="BAA09674.1"/>
    <property type="molecule type" value="mRNA"/>
</dbReference>
<dbReference type="SMR" id="P79161"/>
<dbReference type="STRING" id="9925.ENSCHIP00000007918"/>
<dbReference type="GlyCosmos" id="P79161">
    <property type="glycosylation" value="2 sites, No reported glycans"/>
</dbReference>
<dbReference type="Ensembl" id="ENSCHIT00010009166.1">
    <property type="protein sequence ID" value="ENSCHIP00010006587.1"/>
    <property type="gene ID" value="ENSCHIG00010004727.1"/>
</dbReference>
<dbReference type="Ensembl" id="ENSCHIT00040027932">
    <property type="protein sequence ID" value="ENSCHIP00040021903"/>
    <property type="gene ID" value="ENSCHIG00040012799"/>
</dbReference>
<dbReference type="Proteomes" id="UP000291000">
    <property type="component" value="Unplaced"/>
</dbReference>
<dbReference type="Proteomes" id="UP000694566">
    <property type="component" value="Chromosome 11"/>
</dbReference>
<dbReference type="GO" id="GO:0005829">
    <property type="term" value="C:cytosol"/>
    <property type="evidence" value="ECO:0000250"/>
    <property type="project" value="UniProtKB"/>
</dbReference>
<dbReference type="GO" id="GO:0005615">
    <property type="term" value="C:extracellular space"/>
    <property type="evidence" value="ECO:0000250"/>
    <property type="project" value="UniProtKB"/>
</dbReference>
<dbReference type="GO" id="GO:0005634">
    <property type="term" value="C:nucleus"/>
    <property type="evidence" value="ECO:0007669"/>
    <property type="project" value="UniProtKB-SubCell"/>
</dbReference>
<dbReference type="GO" id="GO:0005507">
    <property type="term" value="F:copper ion binding"/>
    <property type="evidence" value="ECO:0000250"/>
    <property type="project" value="UniProtKB"/>
</dbReference>
<dbReference type="GO" id="GO:0005125">
    <property type="term" value="F:cytokine activity"/>
    <property type="evidence" value="ECO:0007669"/>
    <property type="project" value="UniProtKB-KW"/>
</dbReference>
<dbReference type="GO" id="GO:0005149">
    <property type="term" value="F:interleukin-1 receptor binding"/>
    <property type="evidence" value="ECO:0007669"/>
    <property type="project" value="InterPro"/>
</dbReference>
<dbReference type="GO" id="GO:0034605">
    <property type="term" value="P:cellular response to heat"/>
    <property type="evidence" value="ECO:0000250"/>
    <property type="project" value="UniProtKB"/>
</dbReference>
<dbReference type="GO" id="GO:0071222">
    <property type="term" value="P:cellular response to lipopolysaccharide"/>
    <property type="evidence" value="ECO:0007669"/>
    <property type="project" value="TreeGrafter"/>
</dbReference>
<dbReference type="GO" id="GO:0019221">
    <property type="term" value="P:cytokine-mediated signaling pathway"/>
    <property type="evidence" value="ECO:0007669"/>
    <property type="project" value="TreeGrafter"/>
</dbReference>
<dbReference type="GO" id="GO:0001660">
    <property type="term" value="P:fever generation"/>
    <property type="evidence" value="ECO:0007669"/>
    <property type="project" value="UniProtKB-KW"/>
</dbReference>
<dbReference type="GO" id="GO:0006955">
    <property type="term" value="P:immune response"/>
    <property type="evidence" value="ECO:0007669"/>
    <property type="project" value="InterPro"/>
</dbReference>
<dbReference type="GO" id="GO:0051781">
    <property type="term" value="P:positive regulation of cell division"/>
    <property type="evidence" value="ECO:0007669"/>
    <property type="project" value="UniProtKB-KW"/>
</dbReference>
<dbReference type="GO" id="GO:0010628">
    <property type="term" value="P:positive regulation of gene expression"/>
    <property type="evidence" value="ECO:0007669"/>
    <property type="project" value="TreeGrafter"/>
</dbReference>
<dbReference type="GO" id="GO:0033092">
    <property type="term" value="P:positive regulation of immature T cell proliferation in thymus"/>
    <property type="evidence" value="ECO:0007669"/>
    <property type="project" value="TreeGrafter"/>
</dbReference>
<dbReference type="GO" id="GO:0046688">
    <property type="term" value="P:response to copper ion"/>
    <property type="evidence" value="ECO:0000250"/>
    <property type="project" value="UniProtKB"/>
</dbReference>
<dbReference type="CDD" id="cd23295">
    <property type="entry name" value="beta-trefoil_IL1A"/>
    <property type="match status" value="1"/>
</dbReference>
<dbReference type="FunFam" id="2.80.10.50:FF:000049">
    <property type="entry name" value="Interleukin-1 alpha"/>
    <property type="match status" value="1"/>
</dbReference>
<dbReference type="Gene3D" id="2.80.10.50">
    <property type="match status" value="1"/>
</dbReference>
<dbReference type="InterPro" id="IPR003295">
    <property type="entry name" value="IL-1_alpha"/>
</dbReference>
<dbReference type="InterPro" id="IPR020877">
    <property type="entry name" value="IL-1_CS"/>
</dbReference>
<dbReference type="InterPro" id="IPR000975">
    <property type="entry name" value="IL-1_fam"/>
</dbReference>
<dbReference type="InterPro" id="IPR003502">
    <property type="entry name" value="IL-1_propep"/>
</dbReference>
<dbReference type="InterPro" id="IPR008996">
    <property type="entry name" value="IL1/FGF"/>
</dbReference>
<dbReference type="PANTHER" id="PTHR10078:SF33">
    <property type="entry name" value="INTERLEUKIN-1 ALPHA"/>
    <property type="match status" value="1"/>
</dbReference>
<dbReference type="PANTHER" id="PTHR10078">
    <property type="entry name" value="INTERLEUKIN-1 FAMILY MEMBER"/>
    <property type="match status" value="1"/>
</dbReference>
<dbReference type="Pfam" id="PF00340">
    <property type="entry name" value="IL1"/>
    <property type="match status" value="1"/>
</dbReference>
<dbReference type="Pfam" id="PF02394">
    <property type="entry name" value="IL1_propep"/>
    <property type="match status" value="1"/>
</dbReference>
<dbReference type="PRINTS" id="PR00264">
    <property type="entry name" value="INTERLEUKIN1"/>
</dbReference>
<dbReference type="PRINTS" id="PR01358">
    <property type="entry name" value="INTRLEUKIN1A"/>
</dbReference>
<dbReference type="PRINTS" id="PR01357">
    <property type="entry name" value="INTRLEUKN1AB"/>
</dbReference>
<dbReference type="SMART" id="SM00125">
    <property type="entry name" value="IL1"/>
    <property type="match status" value="1"/>
</dbReference>
<dbReference type="SUPFAM" id="SSF50353">
    <property type="entry name" value="Cytokine"/>
    <property type="match status" value="1"/>
</dbReference>
<dbReference type="PROSITE" id="PS00253">
    <property type="entry name" value="INTERLEUKIN_1"/>
    <property type="match status" value="1"/>
</dbReference>
<name>IL1A_CAPHI</name>
<comment type="function">
    <text evidence="3">Cytokine constitutively present intracellularly in nearly all resting non-hematopoietic cells that plays an important role in inflammation and bridges the innate and adaptive immune systems. After binding to its receptor IL1R1 together with its accessory protein IL1RAP, forms the high affinity interleukin-1 receptor complex. Signaling involves the recruitment of adapter molecules such as MYD88, IRAK1 or IRAK4. In turn, mediates the activation of NF-kappa-B and the three MAPK pathways p38, p42/p44 and JNK pathways. Within the cell, acts as an alarmin and cell death results in its liberation in the extracellular space after disruption of the cell membrane to induce inflammation and alert the host to injury or damage. In addition to its role as a danger signal, which occurs when the cytokine is passively released by cell necrosis, directly senses DNA damage and acts as signal for genotoxic stress without loss of cell integrity.</text>
</comment>
<comment type="subunit">
    <text evidence="3">Monomer. Interacts with TMED10; the interaction mediates the translocation from the cytoplasm into the ERGIC (endoplasmic reticulum-Golgi intermediate compartment) and thereby secretion. Interacts with IL1R1. Interacts with S100A13; this interaction is the first step in the export of IL1A, followed by direct translocation of this complex across the plasma membrane.</text>
</comment>
<comment type="subcellular location">
    <subcellularLocation>
        <location evidence="3">Nucleus</location>
    </subcellularLocation>
    <subcellularLocation>
        <location evidence="3">Cytoplasm</location>
    </subcellularLocation>
    <subcellularLocation>
        <location evidence="3">Secreted</location>
    </subcellularLocation>
    <text evidence="3">The lack of a specific hydrophobic segment in the precursor sequence suggests that IL-1 is released by damaged cells or is secreted by a mechanism differing from that used for other secretory proteins. The secretion is dependent on protein unfolding and facilitated by the cargo receptor TMED10; it results in protein translocation from the cytoplasm into the ERGIC (endoplasmic reticulum-Golgi intermediate compartment) followed by vesicle entry and secretion. Recruited to DNA damage sites and secreted after genotoxic stress.</text>
</comment>
<comment type="domain">
    <text>The similarity among the IL-1 precursors suggests that the amino ends of these proteins serve some as yet undefined function.</text>
</comment>
<comment type="PTM">
    <text evidence="3">Acetylated within its nuclear localization sequence, which impacts subcellular localization.</text>
</comment>
<comment type="PTM">
    <text evidence="3">Proteolytic processed by CAPN1 in a calcium-dependent manner. Cleavage from 31 kDa precursor to 18 kDa biologically active molecules.</text>
</comment>
<comment type="PTM">
    <text evidence="3">Phosphorylated. Phosphorylation greatly enhances susceptibility to digestion and promotes the conversion of pre-IL1A alpha to the biologically active IL1A.</text>
</comment>
<comment type="similarity">
    <text evidence="5">Belongs to the IL-1 family.</text>
</comment>